<accession>Q9I6V6</accession>
<evidence type="ECO:0000255" key="1">
    <source>
        <dbReference type="PROSITE-ProRule" id="PRU00102"/>
    </source>
</evidence>
<evidence type="ECO:0000255" key="2">
    <source>
        <dbReference type="PROSITE-ProRule" id="PRU00140"/>
    </source>
</evidence>
<evidence type="ECO:0000255" key="3">
    <source>
        <dbReference type="PROSITE-ProRule" id="PRU00284"/>
    </source>
</evidence>
<evidence type="ECO:0000256" key="4">
    <source>
        <dbReference type="SAM" id="MobiDB-lite"/>
    </source>
</evidence>
<evidence type="ECO:0000269" key="5">
    <source>
    </source>
</evidence>
<evidence type="ECO:0000269" key="6">
    <source>
    </source>
</evidence>
<evidence type="ECO:0000269" key="7">
    <source>
    </source>
</evidence>
<evidence type="ECO:0000269" key="8">
    <source>
    </source>
</evidence>
<evidence type="ECO:0000269" key="9">
    <source>
    </source>
</evidence>
<evidence type="ECO:0000269" key="10">
    <source>
    </source>
</evidence>
<evidence type="ECO:0000269" key="11">
    <source>
    </source>
</evidence>
<evidence type="ECO:0000269" key="12">
    <source>
    </source>
</evidence>
<evidence type="ECO:0000269" key="13">
    <source>
    </source>
</evidence>
<evidence type="ECO:0000269" key="14">
    <source>
    </source>
</evidence>
<evidence type="ECO:0000269" key="15">
    <source>
    </source>
</evidence>
<evidence type="ECO:0000269" key="16">
    <source>
    </source>
</evidence>
<evidence type="ECO:0000303" key="17">
    <source>
    </source>
</evidence>
<evidence type="ECO:0000303" key="18">
    <source>
    </source>
</evidence>
<evidence type="ECO:0000303" key="19">
    <source>
    </source>
</evidence>
<evidence type="ECO:0000305" key="20"/>
<evidence type="ECO:0000305" key="21">
    <source>
    </source>
</evidence>
<evidence type="ECO:0000305" key="22">
    <source>
    </source>
</evidence>
<evidence type="ECO:0000305" key="23">
    <source>
    </source>
</evidence>
<evidence type="ECO:0000305" key="24">
    <source>
    </source>
</evidence>
<evidence type="ECO:0000312" key="25">
    <source>
        <dbReference type="EMBL" id="AAG03566.1"/>
    </source>
</evidence>
<evidence type="ECO:0007744" key="26">
    <source>
        <dbReference type="PDB" id="3LNR"/>
    </source>
</evidence>
<evidence type="ECO:0007744" key="27">
    <source>
        <dbReference type="PDB" id="3VOL"/>
    </source>
</evidence>
<evidence type="ECO:0007744" key="28">
    <source>
        <dbReference type="PDB" id="4HI4"/>
    </source>
</evidence>
<evidence type="ECO:0007744" key="29">
    <source>
        <dbReference type="PDB" id="4I3M"/>
    </source>
</evidence>
<evidence type="ECO:0007744" key="30">
    <source>
        <dbReference type="PDB" id="4I44"/>
    </source>
</evidence>
<evidence type="ECO:0007829" key="31">
    <source>
        <dbReference type="PDB" id="3VOL"/>
    </source>
</evidence>
<evidence type="ECO:0007829" key="32">
    <source>
        <dbReference type="PDB" id="4HI4"/>
    </source>
</evidence>
<evidence type="ECO:0007829" key="33">
    <source>
        <dbReference type="PDB" id="4I3M"/>
    </source>
</evidence>
<comment type="function">
    <text evidence="5 6 9 10 13 14 16">Chemoreceptor that plays a critical role in the virulence and pathogenesis of P.aeruginosa in a variety of hosts (PubMed:31511598). Probably acts through oxygen sensing (PubMed:28167524, PubMed:31511598, PubMed:34383467). Uses a heme-based sensor (PubMed:21255112, PubMed:22622145). Could be involved in chemotaxis (PubMed:12142407, PubMed:14987771). When expressed in E.coli, is able to sense and mediate repellent responses to oxygen, carbon monoxide and nitric oxide (PubMed:21255112).</text>
</comment>
<comment type="subunit">
    <text evidence="11 12 15 16 23">Homodimer (PubMed:21255112, PubMed:23274111, PubMed:34383467). The PAS domains form dimers in the presence and absence of oxygen (PubMed:34383467). Interacts with the methyltransferase CheR2 via the C-terminal McpB pentapeptide GWEEF (PubMed:24714571). Interacts with the methylesterase/gutaminase CheB2, which also binds to the GWEEF pentapeptide (PubMed:33187094).</text>
</comment>
<comment type="interaction">
    <interactant intactId="EBI-15848257">
        <id>Q9I6V6</id>
    </interactant>
    <interactant intactId="EBI-15848257">
        <id>Q9I6V6</id>
        <label>mcpB</label>
    </interactant>
    <organismsDiffer>false</organismsDiffer>
    <experiments>5</experiments>
</comment>
<comment type="subcellular location">
    <subcellularLocation>
        <location evidence="21">Cytoplasm</location>
    </subcellularLocation>
</comment>
<comment type="induction">
    <text evidence="7">Expression is regulated by the sigma factor RpoS.</text>
</comment>
<comment type="domain">
    <text evidence="8 9 11 13 16">Contains five HAMP domains, three at the N-terminus and two at the C-terminus, separated by a PAS-sensing domain (PubMed:20399181). The PAS domain binds penta-coordinated b-type heme and is likely responsible for sensing the gases (PubMed:21255112, PubMed:28167524). Binding of oxygen induces conformational changes in the PAS-heme domain (PubMed:34383467). The N-terminal HAMP domains facilitate the O(2)-dependent shift of PAS to the signal-on conformation (PubMed:34383467). Signals propagate from the PAS domain to the C-terminal HAMP domains via a conserved DxT motif (PubMed:34383467). PAS and HAMP domains do not directly interact but are arranged in a linear fashion (PubMed:23274111).</text>
</comment>
<comment type="PTM">
    <text evidence="9 12 24">Methylated by CheR2, but not by CheR1, CheR3 or WspC (PubMed:24714571). Demethylated by CheB2 (Probable). In vitro, can be methylated by E.coli CheR (PubMed:21255112).</text>
</comment>
<comment type="disruption phenotype">
    <text evidence="5 6 14">The deletion of the gene results in an attenuation of bacterial virulence in different infection models in species as diverse as C.elegans, E.foetida or the insects A.bipunctata and C.carnae (PubMed:31511598). Mutants have general chemotaxis defects (PubMed:12142407). Mutant shows decreased aerotaxis (PubMed:14987771). Aerotaxis is abolished in the aer-mcpB double mutant (PubMed:14987771).</text>
</comment>
<comment type="similarity">
    <text evidence="20">Belongs to the methyl-accepting chemotaxis (MCP) protein family.</text>
</comment>
<reference key="1">
    <citation type="journal article" date="2000" name="Nature">
        <title>Complete genome sequence of Pseudomonas aeruginosa PAO1, an opportunistic pathogen.</title>
        <authorList>
            <person name="Stover C.K."/>
            <person name="Pham X.-Q.T."/>
            <person name="Erwin A.L."/>
            <person name="Mizoguchi S.D."/>
            <person name="Warrener P."/>
            <person name="Hickey M.J."/>
            <person name="Brinkman F.S.L."/>
            <person name="Hufnagle W.O."/>
            <person name="Kowalik D.J."/>
            <person name="Lagrou M."/>
            <person name="Garber R.L."/>
            <person name="Goltry L."/>
            <person name="Tolentino E."/>
            <person name="Westbrock-Wadman S."/>
            <person name="Yuan Y."/>
            <person name="Brody L.L."/>
            <person name="Coulter S.N."/>
            <person name="Folger K.R."/>
            <person name="Kas A."/>
            <person name="Larbig K."/>
            <person name="Lim R.M."/>
            <person name="Smith K.A."/>
            <person name="Spencer D.H."/>
            <person name="Wong G.K.-S."/>
            <person name="Wu Z."/>
            <person name="Paulsen I.T."/>
            <person name="Reizer J."/>
            <person name="Saier M.H. Jr."/>
            <person name="Hancock R.E.W."/>
            <person name="Lory S."/>
            <person name="Olson M.V."/>
        </authorList>
    </citation>
    <scope>NUCLEOTIDE SEQUENCE [LARGE SCALE GENOMIC DNA]</scope>
    <source>
        <strain>ATCC 15692 / DSM 22644 / CIP 104116 / JCM 14847 / LMG 12228 / 1C / PRS 101 / PAO1</strain>
    </source>
</reference>
<reference key="2">
    <citation type="journal article" date="2002" name="J. Bacteriol.">
        <title>Cluster II che genes from Pseudomonas aeruginosa are required for an optimal chemotactic response.</title>
        <authorList>
            <person name="Ferrandez A."/>
            <person name="Hawkins A.C."/>
            <person name="Summerfield D.T."/>
            <person name="Harwood C.S."/>
        </authorList>
    </citation>
    <scope>FUNCTION IN CHEMOTAXIS</scope>
    <scope>DISRUPTION PHENOTYPE</scope>
    <source>
        <strain>ATCC 15692 / DSM 22644 / CIP 104116 / JCM 14847 / LMG 12228 / 1C / PRS 101 / PAO1</strain>
    </source>
</reference>
<reference key="3">
    <citation type="journal article" date="2004" name="FEMS Microbiol. Lett.">
        <title>Chemotaxis proteins and transducers for aerotaxis in Pseudomonas aeruginosa.</title>
        <authorList>
            <person name="Hong C.S."/>
            <person name="Shitashiro M."/>
            <person name="Kuroda A."/>
            <person name="Ikeda T."/>
            <person name="Takiguchi N."/>
            <person name="Ohtake H."/>
            <person name="Kato J."/>
        </authorList>
    </citation>
    <scope>FUNCTION IN AEROTAXIS</scope>
    <scope>DISRUPTION PHENOTYPE</scope>
    <source>
        <strain>ATCC 15692 / DSM 22644 / CIP 104116 / JCM 14847 / LMG 12228 / 1C / PRS 101 / PAO1</strain>
    </source>
</reference>
<reference key="4">
    <citation type="journal article" date="2005" name="J. Bacteriol.">
        <title>Expression of Pseudomonas aeruginosa aer-2, one of two aerotaxis transducer genes, is controlled by RpoS.</title>
        <authorList>
            <person name="Hong C.S."/>
            <person name="Kuroda A."/>
            <person name="Takiguchi N."/>
            <person name="Ohtake H."/>
            <person name="Kato J."/>
        </authorList>
    </citation>
    <scope>INDUCTION</scope>
    <source>
        <strain>ATCC 15692 / DSM 22644 / CIP 104116 / JCM 14847 / LMG 12228 / 1C / PRS 101 / PAO1</strain>
    </source>
</reference>
<reference key="5">
    <citation type="journal article" date="2011" name="Mol. Microbiol.">
        <title>PAS/poly-HAMP signalling in Aer-2, a soluble haem-based sensor.</title>
        <authorList>
            <person name="Watts K.J."/>
            <person name="Taylor B.L."/>
            <person name="Johnson M.S."/>
        </authorList>
    </citation>
    <scope>FUNCTION</scope>
    <scope>SUBUNIT</scope>
    <scope>DOMAIN</scope>
    <scope>METHYLATION</scope>
    <scope>MUTAGENESIS OF 1-MET--ARG-56; 1-MET--PRO-37 AND 289-GLU--SER-379</scope>
    <source>
        <strain>ATCC 15692 / DSM 22644 / CIP 104116 / JCM 14847 / LMG 12228 / 1C / PRS 101 / PAO1</strain>
    </source>
</reference>
<reference key="6">
    <citation type="journal article" date="2014" name="Sci. Signal.">
        <title>Specificity of the CheR2 methyltransferase in Pseudomonas aeruginosa is directed by a C-terminal pentapeptide in the McpB chemoreceptor.</title>
        <authorList>
            <person name="Garcia-Fontana C."/>
            <person name="Corral Lugo A."/>
            <person name="Krell T."/>
        </authorList>
    </citation>
    <scope>INTERACTION WITH CHER2</scope>
    <scope>METHYLATION BY CHER2</scope>
    <scope>MUTAGENESIS OF 675-GLY--PHE-679</scope>
    <source>
        <strain>ATCC 15692 / DSM 22644 / CIP 104116 / JCM 14847 / LMG 12228 / 1C / PRS 101 / PAO1</strain>
    </source>
</reference>
<reference key="7">
    <citation type="journal article" date="2017" name="J. Bacteriol.">
        <title>Gas sensing and signaling in the PAS-heme domain of the Pseudomonas aeruginosa Aer2 receptor.</title>
        <authorList>
            <person name="Garcia D."/>
            <person name="Orillard E."/>
            <person name="Johnson M.S."/>
            <person name="Watts K.J."/>
        </authorList>
    </citation>
    <scope>FUNCTION</scope>
    <scope>HEME-BINDING</scope>
    <scope>DOMAIN</scope>
    <scope>MUTAGENESIS OF ALA-178; MET-187; ASP-190; ILE-195; TYR-197; ASN-199; PHE-220; ASP-231; PHE-233; HIS-234; PRO-237; HIS-239; GLN-240; LEU-264; GLY-278; TRP-283 AND ASP-285</scope>
</reference>
<reference key="8">
    <citation type="journal article" date="2019" name="Sci. Rep.">
        <title>The involvement of McpB chemoreceptor from Pseudomonas aeruginosa PAO1 in virulence.</title>
        <authorList>
            <person name="Garcia-Fontana C."/>
            <person name="Vilchez J.I."/>
            <person name="Gonzalez-Requena M."/>
            <person name="Gonzalez-Lopez J."/>
            <person name="Krell T."/>
            <person name="Matilla M.A."/>
            <person name="Manzanera M."/>
        </authorList>
    </citation>
    <scope>FUNCTION IN VIRULENCE</scope>
    <scope>DISRUPTION PHENOTYPE</scope>
    <source>
        <strain>ATCC 15692 / DSM 22644 / CIP 104116 / JCM 14847 / LMG 12228 / 1C / PRS 101 / PAO1</strain>
    </source>
</reference>
<reference key="9">
    <citation type="journal article" date="2020" name="Int. J. Mol. Sci.">
        <title>Evidence for pentapeptide-dependent and independent CheB methylesterases.</title>
        <authorList>
            <person name="Velando F."/>
            <person name="Gavira J.A."/>
            <person name="Rico-Jimenez M."/>
            <person name="Matilla M.A."/>
            <person name="Krell T."/>
        </authorList>
    </citation>
    <scope>INTERACTION WITH CHEB2</scope>
</reference>
<reference key="10">
    <citation type="journal article" date="2021" name="Biochemistry">
        <title>Oxygen-induced conformational changes in the PAS-heme domain of the Pseudomonas aeruginosa Aer2 receptor.</title>
        <authorList>
            <person name="Orillard E."/>
            <person name="Anaya S."/>
            <person name="Johnson M.S."/>
            <person name="Watts K.J."/>
        </authorList>
    </citation>
    <scope>FUNCTION</scope>
    <scope>SUBUNIT</scope>
    <scope>DOMAIN</scope>
    <scope>MUTAGENESIS OF LEU-179; ILE-195; VAL-202 AND ILE-213</scope>
</reference>
<reference evidence="26" key="11">
    <citation type="journal article" date="2010" name="Structure">
        <title>Structure of concatenated HAMP domains provides a mechanism for signal transduction.</title>
        <authorList>
            <person name="Airola M.V."/>
            <person name="Watts K.J."/>
            <person name="Bilwes A.M."/>
            <person name="Crane B.R."/>
        </authorList>
    </citation>
    <scope>X-RAY CRYSTALLOGRAPHY (2.64 ANGSTROMS) OF 1-172</scope>
    <scope>DOMAIN</scope>
    <source>
        <strain>ATCC 15692 / DSM 22644 / CIP 104116 / JCM 14847 / LMG 12228 / 1C / PRS 101 / PAO1</strain>
    </source>
</reference>
<reference evidence="27" key="12">
    <citation type="journal article" date="2012" name="Chem. Commun. (Camb.)">
        <title>Structural basis for oxygen sensing and signal transduction of the heme-based sensor protein Aer2 from Pseudomonas aeruginosa.</title>
        <authorList>
            <person name="Sawai H."/>
            <person name="Sugimoto H."/>
            <person name="Shiro Y."/>
            <person name="Ishikawa H."/>
            <person name="Mizutani Y."/>
            <person name="Aono S."/>
        </authorList>
    </citation>
    <scope>X-RAY CRYSTALLOGRAPHY (2.40 ANGSTROMS) OF 173-384 IN COMPLEX WITH HEME</scope>
    <scope>FUNCTION</scope>
    <scope>MUTAGENESIS OF HIS-251 AND TRP-283</scope>
</reference>
<reference evidence="28" key="13">
    <citation type="journal article" date="2013" name="J. Mol. Biol.">
        <title>Architecture of the soluble receptor Aer2 indicates an in-line mechanism for PAS and HAMP domain signaling.</title>
        <authorList>
            <person name="Airola M.V."/>
            <person name="Huh D."/>
            <person name="Sukomon N."/>
            <person name="Widom J."/>
            <person name="Sircar R."/>
            <person name="Borbat P.P."/>
            <person name="Freed J.H."/>
            <person name="Watts K.J."/>
            <person name="Crane B.R."/>
        </authorList>
    </citation>
    <scope>X-RAY CRYSTALLOGRAPHY (2.30 ANGSTROMS) OF 174-289 IN COMPLEX WITH HEME</scope>
    <scope>SUBUNIT</scope>
    <scope>DOMAIN</scope>
</reference>
<reference evidence="29 30" key="14">
    <citation type="journal article" date="2013" name="PLoS Biol.">
        <title>HAMP domain conformers that propagate opposite signals in bacterial chemoreceptors.</title>
        <authorList>
            <person name="Airola M.V."/>
            <person name="Sukomon N."/>
            <person name="Samanta D."/>
            <person name="Borbat P.P."/>
            <person name="Freed J.H."/>
            <person name="Watts K.J."/>
            <person name="Crane B.R."/>
        </authorList>
    </citation>
    <scope>X-RAY CRYSTALLOGRAPHY (1.95 ANGSTROMS) OF 1-172 OF MUTANTS GLY-33 AND HIS-44 IN CHIMERIC TRANSMEMBRANE RECEPTORS</scope>
</reference>
<feature type="chain" id="PRO_0000454748" description="Methyl-accepting chemotaxis protein McpB">
    <location>
        <begin position="1"/>
        <end position="679"/>
    </location>
</feature>
<feature type="domain" description="PAS" evidence="2">
    <location>
        <begin position="171"/>
        <end position="213"/>
    </location>
</feature>
<feature type="domain" description="HAMP 5" evidence="1">
    <location>
        <begin position="333"/>
        <end position="385"/>
    </location>
</feature>
<feature type="domain" description="Methyl-accepting transducer" evidence="3">
    <location>
        <begin position="390"/>
        <end position="619"/>
    </location>
</feature>
<feature type="region of interest" description="Divergent domain HAMP 1" evidence="22">
    <location>
        <begin position="8"/>
        <end position="56"/>
    </location>
</feature>
<feature type="region of interest" description="Divergent domain HAMP 2" evidence="22">
    <location>
        <begin position="63"/>
        <end position="112"/>
    </location>
</feature>
<feature type="region of interest" description="Divergent domain HAMP 3" evidence="22">
    <location>
        <begin position="111"/>
        <end position="156"/>
    </location>
</feature>
<feature type="region of interest" description="Divergent domain HAMP 4" evidence="23">
    <location>
        <begin position="289"/>
        <end position="332"/>
    </location>
</feature>
<feature type="region of interest" description="Disordered" evidence="4">
    <location>
        <begin position="405"/>
        <end position="425"/>
    </location>
</feature>
<feature type="region of interest" description="Disordered" evidence="4">
    <location>
        <begin position="644"/>
        <end position="679"/>
    </location>
</feature>
<feature type="short sequence motif" description="DxT. Important for signal propagation" evidence="16">
    <location>
        <begin position="285"/>
        <end position="287"/>
    </location>
</feature>
<feature type="short sequence motif" description="GWEEF pentapeptide. Important for methylation by CheR2" evidence="12">
    <location>
        <begin position="675"/>
        <end position="679"/>
    </location>
</feature>
<feature type="compositionally biased region" description="Polar residues" evidence="4">
    <location>
        <begin position="411"/>
        <end position="425"/>
    </location>
</feature>
<feature type="compositionally biased region" description="Basic and acidic residues" evidence="4">
    <location>
        <begin position="670"/>
        <end position="679"/>
    </location>
</feature>
<feature type="binding site" description="axial binding residue" evidence="10 11 27 28">
    <location>
        <position position="234"/>
    </location>
    <ligand>
        <name>heme</name>
        <dbReference type="ChEBI" id="CHEBI:30413"/>
    </ligand>
    <ligandPart>
        <name>Fe</name>
        <dbReference type="ChEBI" id="CHEBI:18248"/>
    </ligandPart>
</feature>
<feature type="site" description="Important for gas binding and signaling" evidence="13">
    <location>
        <position position="264"/>
    </location>
</feature>
<feature type="site" description="Plays a crucial role in stabilization of the heme-bound O(2)" evidence="10 13">
    <location>
        <position position="283"/>
    </location>
</feature>
<feature type="mutagenesis site" description="Unresponsive to O(2)." evidence="9">
    <location>
        <begin position="1"/>
        <end position="56"/>
    </location>
</feature>
<feature type="mutagenesis site" description="Behaves like wild-type in a temporal O(2) assay, except that it generates a slightly lower tumbling bias at higher O(2) concentration." evidence="9">
    <location>
        <begin position="1"/>
        <end position="37"/>
    </location>
</feature>
<feature type="mutagenesis site" description="Mediates wild-type responses to both O(2) and CO." evidence="13">
    <original>A</original>
    <variation>V</variation>
    <location>
        <position position="178"/>
    </location>
</feature>
<feature type="mutagenesis site" description="Signal-off mutant that does not respond to either O(2) or CO." evidence="16">
    <original>L</original>
    <variation>C</variation>
    <location>
        <position position="179"/>
    </location>
</feature>
<feature type="mutagenesis site" description="Signal-off mutant that does not respond to either O(2) or CO." evidence="13">
    <original>M</original>
    <variation>A</variation>
    <location>
        <position position="187"/>
    </location>
</feature>
<feature type="mutagenesis site" description="Signal-off mutant that does not respond to either O(2) or CO." evidence="13">
    <original>D</original>
    <variation>A</variation>
    <location>
        <position position="190"/>
    </location>
</feature>
<feature type="mutagenesis site" description="Signal-off mutant that does not respond to either O(2) or CO." evidence="13 16">
    <original>I</original>
    <variation>A</variation>
    <variation>C</variation>
    <location>
        <position position="195"/>
    </location>
</feature>
<feature type="mutagenesis site" description="Signal-off mutant that does not respond to either O(2) or CO." evidence="13">
    <original>Y</original>
    <variation>A</variation>
    <location>
        <position position="197"/>
    </location>
</feature>
<feature type="mutagenesis site" description="Signal-off mutant that does not respond to either O(2) or CO." evidence="13">
    <original>N</original>
    <variation>A</variation>
    <location>
        <position position="199"/>
    </location>
</feature>
<feature type="mutagenesis site" description="Signal-off mutant that does not respond to either O(2) or CO." evidence="16">
    <original>V</original>
    <variation>C</variation>
    <location>
        <position position="202"/>
    </location>
</feature>
<feature type="mutagenesis site" description="Signal-off mutant that does not respond to either O(2) or CO." evidence="16">
    <original>I</original>
    <variation>C</variation>
    <location>
        <position position="213"/>
    </location>
</feature>
<feature type="mutagenesis site" description="Signal-off mutant that does not respond to either O(2) or CO." evidence="13">
    <original>F</original>
    <variation>A</variation>
    <location>
        <position position="220"/>
    </location>
</feature>
<feature type="mutagenesis site" description="Mediates wild-type responses to both O(2) and CO." evidence="13">
    <original>D</original>
    <variation>A</variation>
    <location>
        <position position="231"/>
    </location>
</feature>
<feature type="mutagenesis site" description="Signal-off mutant that does not respond to either O(2) or CO." evidence="13">
    <original>F</original>
    <variation>A</variation>
    <location>
        <position position="233"/>
    </location>
</feature>
<feature type="mutagenesis site" description="Retains 20% of heme content. Retains 6% of heme content; when associated with A-239." evidence="13">
    <original>H</original>
    <variation>A</variation>
    <location>
        <position position="234"/>
    </location>
</feature>
<feature type="mutagenesis site" description="Mediates wild-type responses to both O(2) and CO." evidence="13">
    <original>P</original>
    <variation>A</variation>
    <location>
        <position position="237"/>
    </location>
</feature>
<feature type="mutagenesis site" description="Mediates wild-type responses to both O(2) and CO. Retains wild-type heme content. Retains 6% of heme content; when associated with A-234." evidence="13">
    <original>H</original>
    <variation>A</variation>
    <location>
        <position position="239"/>
    </location>
</feature>
<feature type="mutagenesis site" description="Mediates wild-type responses to both O(2) and CO." evidence="13">
    <original>Q</original>
    <variation>A</variation>
    <location>
        <position position="240"/>
    </location>
</feature>
<feature type="mutagenesis site" description="Accelerates autoxidation." evidence="10">
    <original>H</original>
    <variation>A</variation>
    <location>
        <position position="251"/>
    </location>
</feature>
<feature type="mutagenesis site" description="Locked signal-on, causing cells to tumble constantly in air and in N(2)." evidence="13">
    <original>L</original>
    <variation>A</variation>
    <location>
        <position position="264"/>
    </location>
</feature>
<feature type="mutagenesis site" description="Signal-off receptor that does not respond to the addition or removal of O(2)." evidence="13">
    <original>L</original>
    <variation>D</variation>
    <variation>G</variation>
    <variation>N</variation>
    <variation>P</variation>
    <variation>R</variation>
    <variation>S</variation>
    <variation>W</variation>
    <location>
        <position position="264"/>
    </location>
</feature>
<feature type="mutagenesis site" description="Shows a reduced tumble response to O(2). Responds to CO." evidence="13">
    <original>L</original>
    <variation>F</variation>
    <location>
        <position position="264"/>
    </location>
</feature>
<feature type="mutagenesis site" description="Shows wild-type O(2) responses." evidence="13">
    <original>L</original>
    <variation>I</variation>
    <variation>Q</variation>
    <location>
        <position position="264"/>
    </location>
</feature>
<feature type="mutagenesis site" description="Signal-off mutant that does not respond to the addition or removal of O(2). Does not bind either O(2) or CO." evidence="13">
    <original>L</original>
    <variation>K</variation>
    <location>
        <position position="264"/>
    </location>
</feature>
<feature type="mutagenesis site" description="Mediates an O(2) response but exhibits a 30-sec-delayed smooth-swimming response in N(2) and does not respond to CO." evidence="13">
    <original>L</original>
    <variation>V</variation>
    <location>
        <position position="264"/>
    </location>
</feature>
<feature type="mutagenesis site" description="Signal-off mutant that does not respond to either O(2) or CO." evidence="13">
    <original>G</original>
    <variation>A</variation>
    <location>
        <position position="278"/>
    </location>
</feature>
<feature type="mutagenesis site" description="Signal-off mutant that does not respond to the addition or removal of O(2)." evidence="13">
    <original>W</original>
    <variation>A</variation>
    <variation>C</variation>
    <variation>G</variation>
    <variation>H</variation>
    <variation>K</variation>
    <variation>P</variation>
    <variation>Q</variation>
    <variation>R</variation>
    <variation>S</variation>
    <variation>T</variation>
    <variation>Y</variation>
    <location>
        <position position="283"/>
    </location>
</feature>
<feature type="mutagenesis site" description="Signal-on-biased mutant. 50 to 80% of the cells continue to tumble when air is removed. Can still bind O(2) in vitro." evidence="13">
    <original>W</original>
    <variation>F</variation>
    <location>
        <position position="283"/>
    </location>
</feature>
<feature type="mutagenesis site" description="Inverted phenotype. Cannot form stable O(2) bound in vitro. Responds to CO." evidence="13">
    <original>W</original>
    <variation>I</variation>
    <location>
        <position position="283"/>
    </location>
</feature>
<feature type="mutagenesis site" description="Cannot form stable O(2) bound in vitro. Signal-on-biased mutant. 50 to 80% of the cells continue to tumble when air is removed." evidence="10 13">
    <original>W</original>
    <variation>L</variation>
    <location>
        <position position="283"/>
    </location>
</feature>
<feature type="mutagenesis site" description="Does not respond to the addition or removal of O(2). Responds to CO." evidence="13">
    <original>W</original>
    <variation>V</variation>
    <location>
        <position position="283"/>
    </location>
</feature>
<feature type="mutagenesis site" description="Signal-off mutant that does not respond to either O(2) or CO." evidence="13">
    <original>D</original>
    <variation>A</variation>
    <location>
        <position position="285"/>
    </location>
</feature>
<feature type="mutagenesis site" description="Kinase-on mutant that is unresponsive to changes in O(2) concentrations." evidence="9">
    <location>
        <begin position="289"/>
        <end position="379"/>
    </location>
</feature>
<feature type="mutagenesis site" description="Abolishes interaction with CheR2 and methylation." evidence="12">
    <location>
        <begin position="675"/>
        <end position="679"/>
    </location>
</feature>
<feature type="helix" evidence="33">
    <location>
        <begin position="8"/>
        <end position="26"/>
    </location>
</feature>
<feature type="helix" evidence="33">
    <location>
        <begin position="39"/>
        <end position="41"/>
    </location>
</feature>
<feature type="helix" evidence="33">
    <location>
        <begin position="42"/>
        <end position="80"/>
    </location>
</feature>
<feature type="helix" evidence="33">
    <location>
        <begin position="90"/>
        <end position="92"/>
    </location>
</feature>
<feature type="helix" evidence="33">
    <location>
        <begin position="95"/>
        <end position="126"/>
    </location>
</feature>
<feature type="helix" evidence="33">
    <location>
        <begin position="139"/>
        <end position="141"/>
    </location>
</feature>
<feature type="helix" evidence="33">
    <location>
        <begin position="142"/>
        <end position="155"/>
    </location>
</feature>
<feature type="helix" evidence="32">
    <location>
        <begin position="174"/>
        <end position="179"/>
    </location>
</feature>
<feature type="strand" evidence="32">
    <location>
        <begin position="182"/>
        <end position="190"/>
    </location>
</feature>
<feature type="strand" evidence="32">
    <location>
        <begin position="194"/>
        <end position="198"/>
    </location>
</feature>
<feature type="helix" evidence="32">
    <location>
        <begin position="200"/>
        <end position="208"/>
    </location>
</feature>
<feature type="helix" evidence="32">
    <location>
        <begin position="210"/>
        <end position="216"/>
    </location>
</feature>
<feature type="helix" evidence="32">
    <location>
        <begin position="222"/>
        <end position="224"/>
    </location>
</feature>
<feature type="helix" evidence="32">
    <location>
        <begin position="230"/>
        <end position="233"/>
    </location>
</feature>
<feature type="strand" evidence="31">
    <location>
        <begin position="234"/>
        <end position="236"/>
    </location>
</feature>
<feature type="helix" evidence="32">
    <location>
        <begin position="237"/>
        <end position="246"/>
    </location>
</feature>
<feature type="strand" evidence="32">
    <location>
        <begin position="251"/>
        <end position="257"/>
    </location>
</feature>
<feature type="strand" evidence="32">
    <location>
        <begin position="260"/>
        <end position="270"/>
    </location>
</feature>
<feature type="strand" evidence="32">
    <location>
        <begin position="276"/>
        <end position="285"/>
    </location>
</feature>
<feature type="helix" evidence="31">
    <location>
        <begin position="287"/>
        <end position="304"/>
    </location>
</feature>
<name>MCPB_PSEAE</name>
<gene>
    <name evidence="17" type="primary">mcpB</name>
    <name evidence="18" type="synonym">aer-2</name>
    <name evidence="19" type="synonym">aer2</name>
    <name evidence="18" type="synonym">tlpG</name>
    <name evidence="25" type="ordered locus">PA0176</name>
</gene>
<protein>
    <recommendedName>
        <fullName evidence="20">Methyl-accepting chemotaxis protein McpB</fullName>
    </recommendedName>
    <alternativeName>
        <fullName evidence="20">Aerotaxis transducer Aer2</fullName>
    </alternativeName>
</protein>
<dbReference type="EMBL" id="AE004091">
    <property type="protein sequence ID" value="AAG03566.1"/>
    <property type="molecule type" value="Genomic_DNA"/>
</dbReference>
<dbReference type="PIR" id="A83624">
    <property type="entry name" value="A83624"/>
</dbReference>
<dbReference type="RefSeq" id="NP_248866.1">
    <property type="nucleotide sequence ID" value="NC_002516.2"/>
</dbReference>
<dbReference type="RefSeq" id="WP_003112650.1">
    <property type="nucleotide sequence ID" value="NZ_QZGE01000015.1"/>
</dbReference>
<dbReference type="PDB" id="3LNR">
    <property type="method" value="X-ray"/>
    <property type="resolution" value="2.64 A"/>
    <property type="chains" value="A=1-172"/>
</dbReference>
<dbReference type="PDB" id="3VOL">
    <property type="method" value="X-ray"/>
    <property type="resolution" value="2.40 A"/>
    <property type="chains" value="A=173-384"/>
</dbReference>
<dbReference type="PDB" id="4HI4">
    <property type="method" value="X-ray"/>
    <property type="resolution" value="2.30 A"/>
    <property type="chains" value="A/B/D/G=174-289"/>
</dbReference>
<dbReference type="PDB" id="4I3M">
    <property type="method" value="X-ray"/>
    <property type="resolution" value="1.95 A"/>
    <property type="chains" value="A=1-172"/>
</dbReference>
<dbReference type="PDB" id="4I44">
    <property type="method" value="X-ray"/>
    <property type="resolution" value="2.88 A"/>
    <property type="chains" value="A=1-172"/>
</dbReference>
<dbReference type="PDBsum" id="3LNR"/>
<dbReference type="PDBsum" id="3VOL"/>
<dbReference type="PDBsum" id="4HI4"/>
<dbReference type="PDBsum" id="4I3M"/>
<dbReference type="PDBsum" id="4I44"/>
<dbReference type="SMR" id="Q9I6V6"/>
<dbReference type="STRING" id="208964.PA0176"/>
<dbReference type="PaxDb" id="208964-PA0176"/>
<dbReference type="GeneID" id="882219"/>
<dbReference type="KEGG" id="pae:PA0176"/>
<dbReference type="PATRIC" id="fig|208964.12.peg.182"/>
<dbReference type="PseudoCAP" id="PA0176"/>
<dbReference type="HOGENOM" id="CLU_000445_107_1_6"/>
<dbReference type="InParanoid" id="Q9I6V6"/>
<dbReference type="OrthoDB" id="9765776at2"/>
<dbReference type="PhylomeDB" id="Q9I6V6"/>
<dbReference type="BioCyc" id="PAER208964:G1FZ6-177-MONOMER"/>
<dbReference type="EvolutionaryTrace" id="Q9I6V6"/>
<dbReference type="Proteomes" id="UP000002438">
    <property type="component" value="Chromosome"/>
</dbReference>
<dbReference type="GO" id="GO:0005737">
    <property type="term" value="C:cytoplasm"/>
    <property type="evidence" value="ECO:0007669"/>
    <property type="project" value="UniProtKB-SubCell"/>
</dbReference>
<dbReference type="GO" id="GO:0005886">
    <property type="term" value="C:plasma membrane"/>
    <property type="evidence" value="ECO:0000318"/>
    <property type="project" value="GO_Central"/>
</dbReference>
<dbReference type="GO" id="GO:0042802">
    <property type="term" value="F:identical protein binding"/>
    <property type="evidence" value="ECO:0000353"/>
    <property type="project" value="IntAct"/>
</dbReference>
<dbReference type="GO" id="GO:0046872">
    <property type="term" value="F:metal ion binding"/>
    <property type="evidence" value="ECO:0007669"/>
    <property type="project" value="UniProtKB-KW"/>
</dbReference>
<dbReference type="GO" id="GO:0004888">
    <property type="term" value="F:transmembrane signaling receptor activity"/>
    <property type="evidence" value="ECO:0000318"/>
    <property type="project" value="GO_Central"/>
</dbReference>
<dbReference type="GO" id="GO:0009454">
    <property type="term" value="P:aerotaxis"/>
    <property type="evidence" value="ECO:0000315"/>
    <property type="project" value="PseudoCAP"/>
</dbReference>
<dbReference type="GO" id="GO:0006935">
    <property type="term" value="P:chemotaxis"/>
    <property type="evidence" value="ECO:0000318"/>
    <property type="project" value="GO_Central"/>
</dbReference>
<dbReference type="GO" id="GO:0052131">
    <property type="term" value="P:positive aerotaxis"/>
    <property type="evidence" value="ECO:0000315"/>
    <property type="project" value="CACAO"/>
</dbReference>
<dbReference type="GO" id="GO:0007165">
    <property type="term" value="P:signal transduction"/>
    <property type="evidence" value="ECO:0007669"/>
    <property type="project" value="UniProtKB-KW"/>
</dbReference>
<dbReference type="CDD" id="cd17529">
    <property type="entry name" value="HAMP_I"/>
    <property type="match status" value="1"/>
</dbReference>
<dbReference type="CDD" id="cd17528">
    <property type="entry name" value="HAMP_III"/>
    <property type="match status" value="1"/>
</dbReference>
<dbReference type="CDD" id="cd11386">
    <property type="entry name" value="MCP_signal"/>
    <property type="match status" value="1"/>
</dbReference>
<dbReference type="FunFam" id="1.20.120.1530:FF:000009">
    <property type="entry name" value="Aerotaxis transducer Aer2"/>
    <property type="match status" value="1"/>
</dbReference>
<dbReference type="FunFam" id="1.10.287.950:FF:000002">
    <property type="entry name" value="Methyl-accepting chemotaxis protein"/>
    <property type="match status" value="1"/>
</dbReference>
<dbReference type="FunFam" id="3.30.450.20:FF:000075">
    <property type="entry name" value="Methyl-accepting chemotaxis protein"/>
    <property type="match status" value="1"/>
</dbReference>
<dbReference type="Gene3D" id="1.20.120.1530">
    <property type="match status" value="1"/>
</dbReference>
<dbReference type="Gene3D" id="1.10.287.950">
    <property type="entry name" value="Methyl-accepting chemotaxis protein"/>
    <property type="match status" value="1"/>
</dbReference>
<dbReference type="Gene3D" id="3.30.450.20">
    <property type="entry name" value="PAS domain"/>
    <property type="match status" value="1"/>
</dbReference>
<dbReference type="InterPro" id="IPR004090">
    <property type="entry name" value="Chemotax_Me-accpt_rcpt"/>
</dbReference>
<dbReference type="InterPro" id="IPR003660">
    <property type="entry name" value="HAMP_dom"/>
</dbReference>
<dbReference type="InterPro" id="IPR051310">
    <property type="entry name" value="MCP_chemotaxis"/>
</dbReference>
<dbReference type="InterPro" id="IPR054324">
    <property type="entry name" value="McpB_HAMP_1st"/>
</dbReference>
<dbReference type="InterPro" id="IPR054421">
    <property type="entry name" value="McpB_HAMP_2nd"/>
</dbReference>
<dbReference type="InterPro" id="IPR041395">
    <property type="entry name" value="McpB_HAMP_3rd"/>
</dbReference>
<dbReference type="InterPro" id="IPR004089">
    <property type="entry name" value="MCPsignal_dom"/>
</dbReference>
<dbReference type="InterPro" id="IPR000014">
    <property type="entry name" value="PAS"/>
</dbReference>
<dbReference type="InterPro" id="IPR035965">
    <property type="entry name" value="PAS-like_dom_sf"/>
</dbReference>
<dbReference type="PANTHER" id="PTHR43531:SF14">
    <property type="entry name" value="METHYL-ACCEPTING CHEMOTAXIS PROTEIN I-RELATED"/>
    <property type="match status" value="1"/>
</dbReference>
<dbReference type="PANTHER" id="PTHR43531">
    <property type="entry name" value="PROTEIN ICFG"/>
    <property type="match status" value="1"/>
</dbReference>
<dbReference type="Pfam" id="PF18947">
    <property type="entry name" value="HAMP_2"/>
    <property type="match status" value="1"/>
</dbReference>
<dbReference type="Pfam" id="PF18575">
    <property type="entry name" value="HAMP_N3"/>
    <property type="match status" value="1"/>
</dbReference>
<dbReference type="Pfam" id="PF22097">
    <property type="entry name" value="McpB_HAMP_1st"/>
    <property type="match status" value="1"/>
</dbReference>
<dbReference type="Pfam" id="PF21927">
    <property type="entry name" value="McpB_HAMP_2"/>
    <property type="match status" value="1"/>
</dbReference>
<dbReference type="Pfam" id="PF00015">
    <property type="entry name" value="MCPsignal"/>
    <property type="match status" value="1"/>
</dbReference>
<dbReference type="Pfam" id="PF13188">
    <property type="entry name" value="PAS_8"/>
    <property type="match status" value="1"/>
</dbReference>
<dbReference type="PRINTS" id="PR00260">
    <property type="entry name" value="CHEMTRNSDUCR"/>
</dbReference>
<dbReference type="SMART" id="SM00283">
    <property type="entry name" value="MA"/>
    <property type="match status" value="1"/>
</dbReference>
<dbReference type="SUPFAM" id="SSF58104">
    <property type="entry name" value="Methyl-accepting chemotaxis protein (MCP) signaling domain"/>
    <property type="match status" value="1"/>
</dbReference>
<dbReference type="SUPFAM" id="SSF55785">
    <property type="entry name" value="PYP-like sensor domain (PAS domain)"/>
    <property type="match status" value="1"/>
</dbReference>
<dbReference type="PROSITE" id="PS50111">
    <property type="entry name" value="CHEMOTAXIS_TRANSDUC_2"/>
    <property type="match status" value="1"/>
</dbReference>
<dbReference type="PROSITE" id="PS50885">
    <property type="entry name" value="HAMP"/>
    <property type="match status" value="1"/>
</dbReference>
<dbReference type="PROSITE" id="PS50112">
    <property type="entry name" value="PAS"/>
    <property type="match status" value="1"/>
</dbReference>
<keyword id="KW-0002">3D-structure</keyword>
<keyword id="KW-0963">Cytoplasm</keyword>
<keyword id="KW-0349">Heme</keyword>
<keyword id="KW-0408">Iron</keyword>
<keyword id="KW-0479">Metal-binding</keyword>
<keyword id="KW-0488">Methylation</keyword>
<keyword id="KW-1185">Reference proteome</keyword>
<keyword id="KW-0677">Repeat</keyword>
<keyword id="KW-0807">Transducer</keyword>
<organism>
    <name type="scientific">Pseudomonas aeruginosa (strain ATCC 15692 / DSM 22644 / CIP 104116 / JCM 14847 / LMG 12228 / 1C / PRS 101 / PAO1)</name>
    <dbReference type="NCBI Taxonomy" id="208964"/>
    <lineage>
        <taxon>Bacteria</taxon>
        <taxon>Pseudomonadati</taxon>
        <taxon>Pseudomonadota</taxon>
        <taxon>Gammaproteobacteria</taxon>
        <taxon>Pseudomonadales</taxon>
        <taxon>Pseudomonadaceae</taxon>
        <taxon>Pseudomonas</taxon>
    </lineage>
</organism>
<proteinExistence type="evidence at protein level"/>
<sequence>MGLFNAHAVAQQRADRIATLLQSFADGQLDTAVGEAPAPGYERLYDSLRALQRQLREQRAELQQVESLEAGLAEMSRQHEAGWIDQTIPAERLEGRAARIAKGVNELVAAHIAVKMKVVSVVTAYGQGNFEPLMDRLPGKKAQITEAIDGVRERLRGAAEATSAQLATAAYNARIKSALDNVSANVMIADNDLNIIYMNRTVSEMLGRAEADIRKQLPNFDAGRLMGANIDVFHKNPAHQRHLLANLTGVHKAELNLGGRRFSLDVVPVFNDANERLGSAVQWTDRTEEHRAEQEVSQLVQAAAAGDFSKRVEEAGKEGFFLRLAKDLNSLVDTADRGLRDVSRMLGALAQGDLTQRIEADYQGTFGQLKDFSNDTAQSLSRMLGQIREAADTINTAASEIASGNAELSARTEQQASSLEETASSMEELTSTVKLNAENARQANSLAANASEVATQGGTVVQKVVSTMSSINESARKIADIIGVIDGIAFQTNILALNAAVEAARAGEQGRGFAVVAGEVRTLAQRSAAAAKEIKTLISDSVDKVENGNTLVAQAGQTMSDIVVAIRRVTDIMSEIAAASAEQSTGIEEVNSAVSQMDDMTQQNAALVEEAAAAAEAMQEQAGLLNQSVAVFRLDTPPSVVQLASARPSAPRPSAPAPLARSGMARASKARKEDGWEEF</sequence>